<geneLocation type="chloroplast"/>
<feature type="chain" id="PRO_0000217804" description="Photosystem I assembly protein Ycf3">
    <location>
        <begin position="1"/>
        <end position="172"/>
    </location>
</feature>
<feature type="repeat" description="TPR 1">
    <location>
        <begin position="35"/>
        <end position="68"/>
    </location>
</feature>
<feature type="repeat" description="TPR 2">
    <location>
        <begin position="72"/>
        <end position="105"/>
    </location>
</feature>
<feature type="repeat" description="TPR 3">
    <location>
        <begin position="120"/>
        <end position="153"/>
    </location>
</feature>
<reference key="1">
    <citation type="journal article" date="1999" name="J. Mol. Evol.">
        <title>The plastid genome of the cryptophyte alga, Guillardia theta: complete sequence and conserved synteny groups confirm its common ancestry with red algae.</title>
        <authorList>
            <person name="Douglas S.E."/>
            <person name="Penny S.L."/>
        </authorList>
    </citation>
    <scope>NUCLEOTIDE SEQUENCE [LARGE SCALE GENOMIC DNA]</scope>
</reference>
<proteinExistence type="inferred from homology"/>
<organism>
    <name type="scientific">Guillardia theta</name>
    <name type="common">Cryptophyte</name>
    <name type="synonym">Cryptomonas phi</name>
    <dbReference type="NCBI Taxonomy" id="55529"/>
    <lineage>
        <taxon>Eukaryota</taxon>
        <taxon>Cryptophyceae</taxon>
        <taxon>Pyrenomonadales</taxon>
        <taxon>Geminigeraceae</taxon>
        <taxon>Guillardia</taxon>
    </lineage>
</organism>
<comment type="function">
    <text evidence="1">Essential for the assembly of the photosystem I (PSI) complex. May act as a chaperone-like factor to guide the assembly of the PSI subunits.</text>
</comment>
<comment type="subcellular location">
    <subcellularLocation>
        <location evidence="1">Plastid</location>
        <location evidence="1">Chloroplast thylakoid membrane</location>
        <topology evidence="1">Peripheral membrane protein</topology>
    </subcellularLocation>
</comment>
<comment type="similarity">
    <text evidence="1">Belongs to the Ycf3 family.</text>
</comment>
<dbReference type="EMBL" id="AF041468">
    <property type="protein sequence ID" value="AAC35681.1"/>
    <property type="molecule type" value="Genomic_DNA"/>
</dbReference>
<dbReference type="RefSeq" id="NP_050747.1">
    <property type="nucleotide sequence ID" value="NC_000926.1"/>
</dbReference>
<dbReference type="SMR" id="O78490"/>
<dbReference type="GeneID" id="857052"/>
<dbReference type="HOGENOM" id="CLU_141248_0_0_1"/>
<dbReference type="OMA" id="VYYRDGM"/>
<dbReference type="GO" id="GO:0009535">
    <property type="term" value="C:chloroplast thylakoid membrane"/>
    <property type="evidence" value="ECO:0007669"/>
    <property type="project" value="UniProtKB-SubCell"/>
</dbReference>
<dbReference type="GO" id="GO:0015979">
    <property type="term" value="P:photosynthesis"/>
    <property type="evidence" value="ECO:0007669"/>
    <property type="project" value="UniProtKB-UniRule"/>
</dbReference>
<dbReference type="Gene3D" id="1.25.40.10">
    <property type="entry name" value="Tetratricopeptide repeat domain"/>
    <property type="match status" value="1"/>
</dbReference>
<dbReference type="HAMAP" id="MF_00439">
    <property type="entry name" value="Ycf3"/>
    <property type="match status" value="1"/>
</dbReference>
<dbReference type="InterPro" id="IPR022818">
    <property type="entry name" value="PSI_Ycf3_assembly"/>
</dbReference>
<dbReference type="InterPro" id="IPR011990">
    <property type="entry name" value="TPR-like_helical_dom_sf"/>
</dbReference>
<dbReference type="InterPro" id="IPR019734">
    <property type="entry name" value="TPR_rpt"/>
</dbReference>
<dbReference type="InterPro" id="IPR051685">
    <property type="entry name" value="Ycf3/AcsC/BcsC/TPR_MFPF"/>
</dbReference>
<dbReference type="NCBIfam" id="NF002725">
    <property type="entry name" value="PRK02603.1"/>
    <property type="match status" value="1"/>
</dbReference>
<dbReference type="PANTHER" id="PTHR44943">
    <property type="entry name" value="CELLULOSE SYNTHASE OPERON PROTEIN C"/>
    <property type="match status" value="1"/>
</dbReference>
<dbReference type="PANTHER" id="PTHR44943:SF8">
    <property type="entry name" value="TPR REPEAT-CONTAINING PROTEIN MJ0263"/>
    <property type="match status" value="1"/>
</dbReference>
<dbReference type="Pfam" id="PF00515">
    <property type="entry name" value="TPR_1"/>
    <property type="match status" value="1"/>
</dbReference>
<dbReference type="SMART" id="SM00028">
    <property type="entry name" value="TPR"/>
    <property type="match status" value="3"/>
</dbReference>
<dbReference type="SUPFAM" id="SSF48452">
    <property type="entry name" value="TPR-like"/>
    <property type="match status" value="1"/>
</dbReference>
<dbReference type="PROSITE" id="PS50005">
    <property type="entry name" value="TPR"/>
    <property type="match status" value="3"/>
</dbReference>
<dbReference type="PROSITE" id="PS50293">
    <property type="entry name" value="TPR_REGION"/>
    <property type="match status" value="1"/>
</dbReference>
<evidence type="ECO:0000255" key="1">
    <source>
        <dbReference type="HAMAP-Rule" id="MF_00439"/>
    </source>
</evidence>
<accession>O78490</accession>
<sequence>MPRFQKNDNFIDKTFTVLADLVLKILPATKQEKEAFSYYRDGMSAQSEGEYAEALENYYEALRLEEDPYDRSYILYNIGLIYASNGEYVKALEYYHQALDLNSQLPAALNNIAVIYHYQGVKASEKKELDLARTLFDKAAEYWKQAIRLSPNNYIEAQNWLKTTGRSDTLTI</sequence>
<gene>
    <name evidence="1" type="primary">ycf3</name>
</gene>
<name>YCF3_GUITH</name>
<keyword id="KW-0150">Chloroplast</keyword>
<keyword id="KW-0472">Membrane</keyword>
<keyword id="KW-0602">Photosynthesis</keyword>
<keyword id="KW-0934">Plastid</keyword>
<keyword id="KW-0677">Repeat</keyword>
<keyword id="KW-0793">Thylakoid</keyword>
<keyword id="KW-0802">TPR repeat</keyword>
<protein>
    <recommendedName>
        <fullName evidence="1">Photosystem I assembly protein Ycf3</fullName>
    </recommendedName>
</protein>